<accession>Q1CRW5</accession>
<organism>
    <name type="scientific">Helicobacter pylori (strain HPAG1)</name>
    <dbReference type="NCBI Taxonomy" id="357544"/>
    <lineage>
        <taxon>Bacteria</taxon>
        <taxon>Pseudomonadati</taxon>
        <taxon>Campylobacterota</taxon>
        <taxon>Epsilonproteobacteria</taxon>
        <taxon>Campylobacterales</taxon>
        <taxon>Helicobacteraceae</taxon>
        <taxon>Helicobacter</taxon>
    </lineage>
</organism>
<feature type="chain" id="PRO_0000294770" description="Small ribosomal subunit protein uS11">
    <location>
        <begin position="1"/>
        <end position="131"/>
    </location>
</feature>
<dbReference type="EMBL" id="CP000241">
    <property type="protein sequence ID" value="ABF85307.1"/>
    <property type="molecule type" value="Genomic_DNA"/>
</dbReference>
<dbReference type="RefSeq" id="WP_001129297.1">
    <property type="nucleotide sequence ID" value="NC_008086.1"/>
</dbReference>
<dbReference type="SMR" id="Q1CRW5"/>
<dbReference type="KEGG" id="hpa:HPAG1_1240"/>
<dbReference type="HOGENOM" id="CLU_072439_5_0_7"/>
<dbReference type="GO" id="GO:1990904">
    <property type="term" value="C:ribonucleoprotein complex"/>
    <property type="evidence" value="ECO:0007669"/>
    <property type="project" value="UniProtKB-KW"/>
</dbReference>
<dbReference type="GO" id="GO:0005840">
    <property type="term" value="C:ribosome"/>
    <property type="evidence" value="ECO:0007669"/>
    <property type="project" value="UniProtKB-KW"/>
</dbReference>
<dbReference type="GO" id="GO:0019843">
    <property type="term" value="F:rRNA binding"/>
    <property type="evidence" value="ECO:0007669"/>
    <property type="project" value="UniProtKB-UniRule"/>
</dbReference>
<dbReference type="GO" id="GO:0003735">
    <property type="term" value="F:structural constituent of ribosome"/>
    <property type="evidence" value="ECO:0007669"/>
    <property type="project" value="InterPro"/>
</dbReference>
<dbReference type="GO" id="GO:0006412">
    <property type="term" value="P:translation"/>
    <property type="evidence" value="ECO:0007669"/>
    <property type="project" value="UniProtKB-UniRule"/>
</dbReference>
<dbReference type="FunFam" id="3.30.420.80:FF:000001">
    <property type="entry name" value="30S ribosomal protein S11"/>
    <property type="match status" value="1"/>
</dbReference>
<dbReference type="Gene3D" id="3.30.420.80">
    <property type="entry name" value="Ribosomal protein S11"/>
    <property type="match status" value="1"/>
</dbReference>
<dbReference type="HAMAP" id="MF_01310">
    <property type="entry name" value="Ribosomal_uS11"/>
    <property type="match status" value="1"/>
</dbReference>
<dbReference type="InterPro" id="IPR001971">
    <property type="entry name" value="Ribosomal_uS11"/>
</dbReference>
<dbReference type="InterPro" id="IPR019981">
    <property type="entry name" value="Ribosomal_uS11_bac-type"/>
</dbReference>
<dbReference type="InterPro" id="IPR018102">
    <property type="entry name" value="Ribosomal_uS11_CS"/>
</dbReference>
<dbReference type="InterPro" id="IPR036967">
    <property type="entry name" value="Ribosomal_uS11_sf"/>
</dbReference>
<dbReference type="NCBIfam" id="NF003698">
    <property type="entry name" value="PRK05309.1"/>
    <property type="match status" value="1"/>
</dbReference>
<dbReference type="NCBIfam" id="TIGR03632">
    <property type="entry name" value="uS11_bact"/>
    <property type="match status" value="1"/>
</dbReference>
<dbReference type="PANTHER" id="PTHR11759">
    <property type="entry name" value="40S RIBOSOMAL PROTEIN S14/30S RIBOSOMAL PROTEIN S11"/>
    <property type="match status" value="1"/>
</dbReference>
<dbReference type="Pfam" id="PF00411">
    <property type="entry name" value="Ribosomal_S11"/>
    <property type="match status" value="1"/>
</dbReference>
<dbReference type="PIRSF" id="PIRSF002131">
    <property type="entry name" value="Ribosomal_S11"/>
    <property type="match status" value="1"/>
</dbReference>
<dbReference type="SUPFAM" id="SSF53137">
    <property type="entry name" value="Translational machinery components"/>
    <property type="match status" value="1"/>
</dbReference>
<dbReference type="PROSITE" id="PS00054">
    <property type="entry name" value="RIBOSOMAL_S11"/>
    <property type="match status" value="1"/>
</dbReference>
<sequence length="131" mass="14013">MAKRNVVAKKKVVKKNIARGVVYISATFNNTNITITDEMGNVICWSTAGGLGFKGSKKSTPYAAQQAVESALSKAKEHGVKEVGIKVQGPGSGRETAIKSVGATEGVKVLWIKDITPLPHNGCRPPKRRRV</sequence>
<evidence type="ECO:0000255" key="1">
    <source>
        <dbReference type="HAMAP-Rule" id="MF_01310"/>
    </source>
</evidence>
<evidence type="ECO:0000305" key="2"/>
<keyword id="KW-0687">Ribonucleoprotein</keyword>
<keyword id="KW-0689">Ribosomal protein</keyword>
<keyword id="KW-0694">RNA-binding</keyword>
<keyword id="KW-0699">rRNA-binding</keyword>
<comment type="function">
    <text evidence="1">Located on the platform of the 30S subunit, it bridges several disparate RNA helices of the 16S rRNA. Forms part of the Shine-Dalgarno cleft in the 70S ribosome.</text>
</comment>
<comment type="subunit">
    <text evidence="1">Part of the 30S ribosomal subunit. Interacts with proteins S7 and S18. Binds to IF-3.</text>
</comment>
<comment type="similarity">
    <text evidence="1">Belongs to the universal ribosomal protein uS11 family.</text>
</comment>
<proteinExistence type="inferred from homology"/>
<gene>
    <name evidence="1" type="primary">rpsK</name>
    <name type="ordered locus">HPAG1_1240</name>
</gene>
<name>RS11_HELPH</name>
<reference key="1">
    <citation type="journal article" date="2006" name="Proc. Natl. Acad. Sci. U.S.A.">
        <title>The complete genome sequence of a chronic atrophic gastritis Helicobacter pylori strain: evolution during disease progression.</title>
        <authorList>
            <person name="Oh J.D."/>
            <person name="Kling-Baeckhed H."/>
            <person name="Giannakis M."/>
            <person name="Xu J."/>
            <person name="Fulton R.S."/>
            <person name="Fulton L.A."/>
            <person name="Cordum H.S."/>
            <person name="Wang C."/>
            <person name="Elliott G."/>
            <person name="Edwards J."/>
            <person name="Mardis E.R."/>
            <person name="Engstrand L.G."/>
            <person name="Gordon J.I."/>
        </authorList>
    </citation>
    <scope>NUCLEOTIDE SEQUENCE [LARGE SCALE GENOMIC DNA]</scope>
    <source>
        <strain>HPAG1</strain>
    </source>
</reference>
<protein>
    <recommendedName>
        <fullName evidence="1">Small ribosomal subunit protein uS11</fullName>
    </recommendedName>
    <alternativeName>
        <fullName evidence="2">30S ribosomal protein S11</fullName>
    </alternativeName>
</protein>